<evidence type="ECO:0000255" key="1">
    <source>
        <dbReference type="HAMAP-Rule" id="MF_00071"/>
    </source>
</evidence>
<protein>
    <recommendedName>
        <fullName evidence="1">Elongation factor 4</fullName>
        <shortName evidence="1">EF-4</shortName>
        <ecNumber evidence="1">3.6.5.n1</ecNumber>
    </recommendedName>
    <alternativeName>
        <fullName evidence="1">Ribosomal back-translocase LepA</fullName>
    </alternativeName>
</protein>
<keyword id="KW-1003">Cell membrane</keyword>
<keyword id="KW-0342">GTP-binding</keyword>
<keyword id="KW-0378">Hydrolase</keyword>
<keyword id="KW-0472">Membrane</keyword>
<keyword id="KW-0547">Nucleotide-binding</keyword>
<keyword id="KW-0648">Protein biosynthesis</keyword>
<keyword id="KW-1185">Reference proteome</keyword>
<proteinExistence type="inferred from homology"/>
<gene>
    <name evidence="1" type="primary">lepA</name>
    <name type="ordered locus">spr1082</name>
</gene>
<dbReference type="EC" id="3.6.5.n1" evidence="1"/>
<dbReference type="EMBL" id="AE007317">
    <property type="protein sequence ID" value="AAK99885.1"/>
    <property type="molecule type" value="Genomic_DNA"/>
</dbReference>
<dbReference type="PIR" id="A99007">
    <property type="entry name" value="A99007"/>
</dbReference>
<dbReference type="RefSeq" id="NP_358675.1">
    <property type="nucleotide sequence ID" value="NC_003098.1"/>
</dbReference>
<dbReference type="RefSeq" id="WP_001047216.1">
    <property type="nucleotide sequence ID" value="NC_003098.1"/>
</dbReference>
<dbReference type="SMR" id="Q8DPN5"/>
<dbReference type="STRING" id="171101.spr1082"/>
<dbReference type="KEGG" id="spr:spr1082"/>
<dbReference type="PATRIC" id="fig|171101.6.peg.1176"/>
<dbReference type="eggNOG" id="COG0481">
    <property type="taxonomic scope" value="Bacteria"/>
</dbReference>
<dbReference type="HOGENOM" id="CLU_009995_3_3_9"/>
<dbReference type="Proteomes" id="UP000000586">
    <property type="component" value="Chromosome"/>
</dbReference>
<dbReference type="GO" id="GO:0005886">
    <property type="term" value="C:plasma membrane"/>
    <property type="evidence" value="ECO:0007669"/>
    <property type="project" value="UniProtKB-SubCell"/>
</dbReference>
<dbReference type="GO" id="GO:0005525">
    <property type="term" value="F:GTP binding"/>
    <property type="evidence" value="ECO:0007669"/>
    <property type="project" value="UniProtKB-UniRule"/>
</dbReference>
<dbReference type="GO" id="GO:0003924">
    <property type="term" value="F:GTPase activity"/>
    <property type="evidence" value="ECO:0007669"/>
    <property type="project" value="UniProtKB-UniRule"/>
</dbReference>
<dbReference type="GO" id="GO:0043022">
    <property type="term" value="F:ribosome binding"/>
    <property type="evidence" value="ECO:0000318"/>
    <property type="project" value="GO_Central"/>
</dbReference>
<dbReference type="GO" id="GO:0003746">
    <property type="term" value="F:translation elongation factor activity"/>
    <property type="evidence" value="ECO:0007669"/>
    <property type="project" value="UniProtKB-UniRule"/>
</dbReference>
<dbReference type="GO" id="GO:0045727">
    <property type="term" value="P:positive regulation of translation"/>
    <property type="evidence" value="ECO:0000318"/>
    <property type="project" value="GO_Central"/>
</dbReference>
<dbReference type="CDD" id="cd03699">
    <property type="entry name" value="EF4_II"/>
    <property type="match status" value="1"/>
</dbReference>
<dbReference type="CDD" id="cd16260">
    <property type="entry name" value="EF4_III"/>
    <property type="match status" value="1"/>
</dbReference>
<dbReference type="CDD" id="cd01890">
    <property type="entry name" value="LepA"/>
    <property type="match status" value="1"/>
</dbReference>
<dbReference type="CDD" id="cd03709">
    <property type="entry name" value="lepA_C"/>
    <property type="match status" value="1"/>
</dbReference>
<dbReference type="FunFam" id="3.40.50.300:FF:000078">
    <property type="entry name" value="Elongation factor 4"/>
    <property type="match status" value="1"/>
</dbReference>
<dbReference type="FunFam" id="2.40.30.10:FF:000015">
    <property type="entry name" value="Translation factor GUF1, mitochondrial"/>
    <property type="match status" value="1"/>
</dbReference>
<dbReference type="FunFam" id="3.30.70.240:FF:000007">
    <property type="entry name" value="Translation factor GUF1, mitochondrial"/>
    <property type="match status" value="1"/>
</dbReference>
<dbReference type="FunFam" id="3.30.70.2570:FF:000001">
    <property type="entry name" value="Translation factor GUF1, mitochondrial"/>
    <property type="match status" value="1"/>
</dbReference>
<dbReference type="FunFam" id="3.30.70.870:FF:000004">
    <property type="entry name" value="Translation factor GUF1, mitochondrial"/>
    <property type="match status" value="1"/>
</dbReference>
<dbReference type="Gene3D" id="3.30.70.240">
    <property type="match status" value="1"/>
</dbReference>
<dbReference type="Gene3D" id="3.30.70.2570">
    <property type="entry name" value="Elongation factor 4, C-terminal domain"/>
    <property type="match status" value="1"/>
</dbReference>
<dbReference type="Gene3D" id="3.30.70.870">
    <property type="entry name" value="Elongation Factor G (Translational Gtpase), domain 3"/>
    <property type="match status" value="1"/>
</dbReference>
<dbReference type="Gene3D" id="3.40.50.300">
    <property type="entry name" value="P-loop containing nucleotide triphosphate hydrolases"/>
    <property type="match status" value="1"/>
</dbReference>
<dbReference type="Gene3D" id="2.40.30.10">
    <property type="entry name" value="Translation factors"/>
    <property type="match status" value="1"/>
</dbReference>
<dbReference type="HAMAP" id="MF_00071">
    <property type="entry name" value="LepA"/>
    <property type="match status" value="1"/>
</dbReference>
<dbReference type="InterPro" id="IPR006297">
    <property type="entry name" value="EF-4"/>
</dbReference>
<dbReference type="InterPro" id="IPR035647">
    <property type="entry name" value="EFG_III/V"/>
</dbReference>
<dbReference type="InterPro" id="IPR000640">
    <property type="entry name" value="EFG_V-like"/>
</dbReference>
<dbReference type="InterPro" id="IPR004161">
    <property type="entry name" value="EFTu-like_2"/>
</dbReference>
<dbReference type="InterPro" id="IPR031157">
    <property type="entry name" value="G_TR_CS"/>
</dbReference>
<dbReference type="InterPro" id="IPR038363">
    <property type="entry name" value="LepA_C_sf"/>
</dbReference>
<dbReference type="InterPro" id="IPR013842">
    <property type="entry name" value="LepA_CTD"/>
</dbReference>
<dbReference type="InterPro" id="IPR035654">
    <property type="entry name" value="LepA_IV"/>
</dbReference>
<dbReference type="InterPro" id="IPR027417">
    <property type="entry name" value="P-loop_NTPase"/>
</dbReference>
<dbReference type="InterPro" id="IPR005225">
    <property type="entry name" value="Small_GTP-bd"/>
</dbReference>
<dbReference type="InterPro" id="IPR000795">
    <property type="entry name" value="T_Tr_GTP-bd_dom"/>
</dbReference>
<dbReference type="InterPro" id="IPR009000">
    <property type="entry name" value="Transl_B-barrel_sf"/>
</dbReference>
<dbReference type="NCBIfam" id="TIGR01393">
    <property type="entry name" value="lepA"/>
    <property type="match status" value="1"/>
</dbReference>
<dbReference type="NCBIfam" id="TIGR00231">
    <property type="entry name" value="small_GTP"/>
    <property type="match status" value="1"/>
</dbReference>
<dbReference type="PANTHER" id="PTHR43512:SF4">
    <property type="entry name" value="TRANSLATION FACTOR GUF1 HOMOLOG, CHLOROPLASTIC"/>
    <property type="match status" value="1"/>
</dbReference>
<dbReference type="PANTHER" id="PTHR43512">
    <property type="entry name" value="TRANSLATION FACTOR GUF1-RELATED"/>
    <property type="match status" value="1"/>
</dbReference>
<dbReference type="Pfam" id="PF00679">
    <property type="entry name" value="EFG_C"/>
    <property type="match status" value="1"/>
</dbReference>
<dbReference type="Pfam" id="PF00009">
    <property type="entry name" value="GTP_EFTU"/>
    <property type="match status" value="1"/>
</dbReference>
<dbReference type="Pfam" id="PF03144">
    <property type="entry name" value="GTP_EFTU_D2"/>
    <property type="match status" value="1"/>
</dbReference>
<dbReference type="Pfam" id="PF06421">
    <property type="entry name" value="LepA_C"/>
    <property type="match status" value="1"/>
</dbReference>
<dbReference type="PRINTS" id="PR00315">
    <property type="entry name" value="ELONGATNFCT"/>
</dbReference>
<dbReference type="SMART" id="SM00838">
    <property type="entry name" value="EFG_C"/>
    <property type="match status" value="1"/>
</dbReference>
<dbReference type="SUPFAM" id="SSF54980">
    <property type="entry name" value="EF-G C-terminal domain-like"/>
    <property type="match status" value="2"/>
</dbReference>
<dbReference type="SUPFAM" id="SSF52540">
    <property type="entry name" value="P-loop containing nucleoside triphosphate hydrolases"/>
    <property type="match status" value="1"/>
</dbReference>
<dbReference type="SUPFAM" id="SSF50447">
    <property type="entry name" value="Translation proteins"/>
    <property type="match status" value="1"/>
</dbReference>
<dbReference type="PROSITE" id="PS00301">
    <property type="entry name" value="G_TR_1"/>
    <property type="match status" value="1"/>
</dbReference>
<dbReference type="PROSITE" id="PS51722">
    <property type="entry name" value="G_TR_2"/>
    <property type="match status" value="1"/>
</dbReference>
<name>LEPA_STRR6</name>
<organism>
    <name type="scientific">Streptococcus pneumoniae (strain ATCC BAA-255 / R6)</name>
    <dbReference type="NCBI Taxonomy" id="171101"/>
    <lineage>
        <taxon>Bacteria</taxon>
        <taxon>Bacillati</taxon>
        <taxon>Bacillota</taxon>
        <taxon>Bacilli</taxon>
        <taxon>Lactobacillales</taxon>
        <taxon>Streptococcaceae</taxon>
        <taxon>Streptococcus</taxon>
    </lineage>
</organism>
<accession>Q8DPN5</accession>
<comment type="function">
    <text evidence="1">Required for accurate and efficient protein synthesis under certain stress conditions. May act as a fidelity factor of the translation reaction, by catalyzing a one-codon backward translocation of tRNAs on improperly translocated ribosomes. Back-translocation proceeds from a post-translocation (POST) complex to a pre-translocation (PRE) complex, thus giving elongation factor G a second chance to translocate the tRNAs correctly. Binds to ribosomes in a GTP-dependent manner.</text>
</comment>
<comment type="catalytic activity">
    <reaction evidence="1">
        <text>GTP + H2O = GDP + phosphate + H(+)</text>
        <dbReference type="Rhea" id="RHEA:19669"/>
        <dbReference type="ChEBI" id="CHEBI:15377"/>
        <dbReference type="ChEBI" id="CHEBI:15378"/>
        <dbReference type="ChEBI" id="CHEBI:37565"/>
        <dbReference type="ChEBI" id="CHEBI:43474"/>
        <dbReference type="ChEBI" id="CHEBI:58189"/>
        <dbReference type="EC" id="3.6.5.n1"/>
    </reaction>
</comment>
<comment type="subcellular location">
    <subcellularLocation>
        <location evidence="1">Cell membrane</location>
        <topology evidence="1">Peripheral membrane protein</topology>
        <orientation evidence="1">Cytoplasmic side</orientation>
    </subcellularLocation>
</comment>
<comment type="similarity">
    <text evidence="1">Belongs to the TRAFAC class translation factor GTPase superfamily. Classic translation factor GTPase family. LepA subfamily.</text>
</comment>
<feature type="chain" id="PRO_0000176354" description="Elongation factor 4">
    <location>
        <begin position="1"/>
        <end position="607"/>
    </location>
</feature>
<feature type="domain" description="tr-type G">
    <location>
        <begin position="11"/>
        <end position="193"/>
    </location>
</feature>
<feature type="binding site" evidence="1">
    <location>
        <begin position="23"/>
        <end position="28"/>
    </location>
    <ligand>
        <name>GTP</name>
        <dbReference type="ChEBI" id="CHEBI:37565"/>
    </ligand>
</feature>
<feature type="binding site" evidence="1">
    <location>
        <begin position="140"/>
        <end position="143"/>
    </location>
    <ligand>
        <name>GTP</name>
        <dbReference type="ChEBI" id="CHEBI:37565"/>
    </ligand>
</feature>
<reference key="1">
    <citation type="journal article" date="2001" name="J. Bacteriol.">
        <title>Genome of the bacterium Streptococcus pneumoniae strain R6.</title>
        <authorList>
            <person name="Hoskins J."/>
            <person name="Alborn W.E. Jr."/>
            <person name="Arnold J."/>
            <person name="Blaszczak L.C."/>
            <person name="Burgett S."/>
            <person name="DeHoff B.S."/>
            <person name="Estrem S.T."/>
            <person name="Fritz L."/>
            <person name="Fu D.-J."/>
            <person name="Fuller W."/>
            <person name="Geringer C."/>
            <person name="Gilmour R."/>
            <person name="Glass J.S."/>
            <person name="Khoja H."/>
            <person name="Kraft A.R."/>
            <person name="Lagace R.E."/>
            <person name="LeBlanc D.J."/>
            <person name="Lee L.N."/>
            <person name="Lefkowitz E.J."/>
            <person name="Lu J."/>
            <person name="Matsushima P."/>
            <person name="McAhren S.M."/>
            <person name="McHenney M."/>
            <person name="McLeaster K."/>
            <person name="Mundy C.W."/>
            <person name="Nicas T.I."/>
            <person name="Norris F.H."/>
            <person name="O'Gara M."/>
            <person name="Peery R.B."/>
            <person name="Robertson G.T."/>
            <person name="Rockey P."/>
            <person name="Sun P.-M."/>
            <person name="Winkler M.E."/>
            <person name="Yang Y."/>
            <person name="Young-Bellido M."/>
            <person name="Zhao G."/>
            <person name="Zook C.A."/>
            <person name="Baltz R.H."/>
            <person name="Jaskunas S.R."/>
            <person name="Rosteck P.R. Jr."/>
            <person name="Skatrud P.L."/>
            <person name="Glass J.I."/>
        </authorList>
    </citation>
    <scope>NUCLEOTIDE SEQUENCE [LARGE SCALE GENOMIC DNA]</scope>
    <source>
        <strain>ATCC BAA-255 / R6</strain>
    </source>
</reference>
<sequence>MNLEELKKRQGKIRNFSIIAHIDHGKSTLADRILEKTETVSSREMQAQLLDSMDLERERGITIKLNAIELNYTAKDGETYIFHLIDTPGHVDFTYEVSRSLAACEGAILVVDAAQGIEAQTLANVYLALDNDLEIMPIINKIDLPAADPERVRTEIEDVIGLDASEAVLASAKAGIGIEEILEQIVEKVPAPTGDVTAPLKALIFDSVYDAYRGVILQVRVMDGVVKPGDKIQLMSNSKTFDVAEVGIFTPKAVGRDFLATGDVGYIAASIKTVQDTRVGDTVTLATNPAAEPLHGYKQMNPMVFAGLYPIESNKYNDLREALEKLQLNDASLQFEPETSQALGFGFRCGFLGLLHMDVIQERLEREFNIDLIMTAPSVIYKVNLTDGESMDVSNPSEFPDPTKIATIEEPYVKAQIMVPQEFVGAVMELAQRKRGDFVTMDYIDDNRVNVIYQIPLAEIVFDFFDKLKSSTRGYASFDYELSEYRPSKLVKMDILLNGDKVDALSFIVHKDFAYERGKLIVDKLKKIIPRQQFEVPIQAAIGHKIVARTDIKALRKNVLAKCYGGDVSRKRKLLEKQKAGKKRMKSIGSVEVPQEAFLSVLSMDEE</sequence>